<keyword id="KW-0963">Cytoplasm</keyword>
<keyword id="KW-0217">Developmental protein</keyword>
<keyword id="KW-0880">Kelch repeat</keyword>
<keyword id="KW-1185">Reference proteome</keyword>
<keyword id="KW-0677">Repeat</keyword>
<keyword id="KW-0833">Ubl conjugation pathway</keyword>
<sequence>MALPTQQSEELRLYQQTLLQDGLKDMLDHNNFIDCVLKIQGKEFPCHRLVLASCSPYFRAMFLSDLEESKKKEIDLEDVDPDVMGKILHYIYTSEIEITEKNVQDIFSVANMFQIPSIFTVCVSFLQKKLCLSNCLAIFRLGLLLDCPRLAVSARDFVCDRFNLIARDSELYELSPDELIAVISSDSLNIEKEEDVFEVVMKWASKEKEKRTKALPVIFESIRFCLIPQDYIKNKVEKHELVKPNKELLKKLQIVKDAQQGKLPSLKKKTSAKASEGKDGEQVVNGELDEEEEALPGILNDTLRFGMFLKDMIFMISDTGAVAYDPSANECFFASLSAQIPKNHVSLATKENQLFVAGGLYYNEESKEEPLSSYFLQFDHLDSDWLGMPPVPSARCLFGLGESENSIYLIGGKELKEGEQMLDSVLCYDRPSFKWGESDPLPYKVYGHTVVSHDNLVYVLGGKGNEKKCLKRVCVYNPKKFEWKDLAPMKTGRSLFGATVHKGKIFIAAGVTDTGLTNTIEAYDIKTNKWEDFTEFPQERSSLSLVSMNGTLYAIGGFATIENESEELVPTELNDIWRFNEEEKKWEGILREIRYASGATFIAARLNILRLTKM</sequence>
<organism>
    <name type="scientific">Xenopus laevis</name>
    <name type="common">African clawed frog</name>
    <dbReference type="NCBI Taxonomy" id="8355"/>
    <lineage>
        <taxon>Eukaryota</taxon>
        <taxon>Metazoa</taxon>
        <taxon>Chordata</taxon>
        <taxon>Craniata</taxon>
        <taxon>Vertebrata</taxon>
        <taxon>Euteleostomi</taxon>
        <taxon>Amphibia</taxon>
        <taxon>Batrachia</taxon>
        <taxon>Anura</taxon>
        <taxon>Pipoidea</taxon>
        <taxon>Pipidae</taxon>
        <taxon>Xenopodinae</taxon>
        <taxon>Xenopus</taxon>
        <taxon>Xenopus</taxon>
    </lineage>
</organism>
<accession>Q5U504</accession>
<gene>
    <name type="primary">klhl40</name>
    <name type="synonym">kbtbd5</name>
</gene>
<feature type="chain" id="PRO_0000274237" description="Kelch-like protein 40">
    <location>
        <begin position="1"/>
        <end position="614"/>
    </location>
</feature>
<feature type="domain" description="BTB" evidence="2">
    <location>
        <begin position="33"/>
        <end position="100"/>
    </location>
</feature>
<feature type="domain" description="BACK">
    <location>
        <begin position="135"/>
        <end position="237"/>
    </location>
</feature>
<feature type="repeat" description="Kelch 1">
    <location>
        <begin position="353"/>
        <end position="405"/>
    </location>
</feature>
<feature type="repeat" description="Kelch 2">
    <location>
        <begin position="406"/>
        <end position="455"/>
    </location>
</feature>
<feature type="repeat" description="Kelch 3">
    <location>
        <begin position="456"/>
        <end position="503"/>
    </location>
</feature>
<feature type="repeat" description="Kelch 4">
    <location>
        <begin position="504"/>
        <end position="550"/>
    </location>
</feature>
<feature type="repeat" description="Kelch 5">
    <location>
        <begin position="552"/>
        <end position="606"/>
    </location>
</feature>
<proteinExistence type="evidence at transcript level"/>
<name>KLH40_XENLA</name>
<protein>
    <recommendedName>
        <fullName>Kelch-like protein 40</fullName>
    </recommendedName>
    <alternativeName>
        <fullName>Kelch repeat and BTB domain-containing protein 5</fullName>
    </alternativeName>
</protein>
<comment type="function">
    <text evidence="1">Substrate-specific adapter of a BCR (BTB-CUL3-RBX1) E3 ubiquitin ligase complex that acts as a key regulator of skeletal muscle development.</text>
</comment>
<comment type="subunit">
    <text evidence="1">Component of the BCR(KLHL40) E3 ubiquitin ligase complex.</text>
</comment>
<comment type="subcellular location">
    <subcellularLocation>
        <location evidence="1">Cytoplasm</location>
    </subcellularLocation>
    <subcellularLocation>
        <location evidence="1">Cytoplasm</location>
        <location evidence="1">Myofibril</location>
        <location evidence="1">Sarcomere</location>
        <location evidence="1">A band</location>
    </subcellularLocation>
    <subcellularLocation>
        <location evidence="1">Cytoplasm</location>
        <location evidence="1">Myofibril</location>
        <location evidence="1">Sarcomere</location>
        <location evidence="1">I band</location>
    </subcellularLocation>
</comment>
<comment type="similarity">
    <text evidence="3">Belongs to the KLHL40 family.</text>
</comment>
<dbReference type="EMBL" id="BC084883">
    <property type="protein sequence ID" value="AAH84883.1"/>
    <property type="molecule type" value="mRNA"/>
</dbReference>
<dbReference type="RefSeq" id="NP_001090465.1">
    <property type="nucleotide sequence ID" value="NM_001096996.1"/>
</dbReference>
<dbReference type="SMR" id="Q5U504"/>
<dbReference type="DNASU" id="779378"/>
<dbReference type="GeneID" id="779378"/>
<dbReference type="KEGG" id="xla:779378"/>
<dbReference type="AGR" id="Xenbase:XB-GENE-6252448"/>
<dbReference type="CTD" id="779378"/>
<dbReference type="Xenbase" id="XB-GENE-6252448">
    <property type="gene designation" value="klhl40.S"/>
</dbReference>
<dbReference type="OrthoDB" id="6359816at2759"/>
<dbReference type="Proteomes" id="UP000186698">
    <property type="component" value="Chromosome 6S"/>
</dbReference>
<dbReference type="Bgee" id="779378">
    <property type="expression patterns" value="Expressed in muscle tissue and 7 other cell types or tissues"/>
</dbReference>
<dbReference type="GO" id="GO:0031672">
    <property type="term" value="C:A band"/>
    <property type="evidence" value="ECO:0000318"/>
    <property type="project" value="GO_Central"/>
</dbReference>
<dbReference type="GO" id="GO:0031463">
    <property type="term" value="C:Cul3-RING ubiquitin ligase complex"/>
    <property type="evidence" value="ECO:0000250"/>
    <property type="project" value="UniProtKB"/>
</dbReference>
<dbReference type="GO" id="GO:0005737">
    <property type="term" value="C:cytoplasm"/>
    <property type="evidence" value="ECO:0000250"/>
    <property type="project" value="UniProtKB"/>
</dbReference>
<dbReference type="GO" id="GO:0031674">
    <property type="term" value="C:I band"/>
    <property type="evidence" value="ECO:0000318"/>
    <property type="project" value="GO_Central"/>
</dbReference>
<dbReference type="GO" id="GO:1990756">
    <property type="term" value="F:ubiquitin-like ligase-substrate adaptor activity"/>
    <property type="evidence" value="ECO:0000318"/>
    <property type="project" value="GO_Central"/>
</dbReference>
<dbReference type="GO" id="GO:0032435">
    <property type="term" value="P:negative regulation of proteasomal ubiquitin-dependent protein catabolic process"/>
    <property type="evidence" value="ECO:0000318"/>
    <property type="project" value="GO_Central"/>
</dbReference>
<dbReference type="GO" id="GO:0031397">
    <property type="term" value="P:negative regulation of protein ubiquitination"/>
    <property type="evidence" value="ECO:0000318"/>
    <property type="project" value="GO_Central"/>
</dbReference>
<dbReference type="GO" id="GO:0032436">
    <property type="term" value="P:positive regulation of proteasomal ubiquitin-dependent protein catabolic process"/>
    <property type="evidence" value="ECO:0000250"/>
    <property type="project" value="UniProtKB"/>
</dbReference>
<dbReference type="GO" id="GO:0031398">
    <property type="term" value="P:positive regulation of protein ubiquitination"/>
    <property type="evidence" value="ECO:0000250"/>
    <property type="project" value="UniProtKB"/>
</dbReference>
<dbReference type="GO" id="GO:0043161">
    <property type="term" value="P:proteasome-mediated ubiquitin-dependent protein catabolic process"/>
    <property type="evidence" value="ECO:0000318"/>
    <property type="project" value="GO_Central"/>
</dbReference>
<dbReference type="GO" id="GO:0048741">
    <property type="term" value="P:skeletal muscle fiber development"/>
    <property type="evidence" value="ECO:0000250"/>
    <property type="project" value="UniProtKB"/>
</dbReference>
<dbReference type="GO" id="GO:0098528">
    <property type="term" value="P:skeletal muscle fiber differentiation"/>
    <property type="evidence" value="ECO:0000250"/>
    <property type="project" value="UniProtKB"/>
</dbReference>
<dbReference type="CDD" id="cd18516">
    <property type="entry name" value="BACK_KLHL40_KBTBD5"/>
    <property type="match status" value="1"/>
</dbReference>
<dbReference type="CDD" id="cd18340">
    <property type="entry name" value="BTB_POZ_KLHL40_KBTBD5"/>
    <property type="match status" value="1"/>
</dbReference>
<dbReference type="FunFam" id="3.30.710.10:FF:000006">
    <property type="entry name" value="Kelch repeat and BTB domain-containing 6"/>
    <property type="match status" value="1"/>
</dbReference>
<dbReference type="FunFam" id="1.25.40.420:FF:000001">
    <property type="entry name" value="Kelch-like family member 12"/>
    <property type="match status" value="1"/>
</dbReference>
<dbReference type="FunFam" id="2.120.10.80:FF:000037">
    <property type="entry name" value="Kelch-like family member 40"/>
    <property type="match status" value="1"/>
</dbReference>
<dbReference type="Gene3D" id="1.25.40.420">
    <property type="match status" value="1"/>
</dbReference>
<dbReference type="Gene3D" id="2.120.10.80">
    <property type="entry name" value="Kelch-type beta propeller"/>
    <property type="match status" value="1"/>
</dbReference>
<dbReference type="Gene3D" id="3.30.710.10">
    <property type="entry name" value="Potassium Channel Kv1.1, Chain A"/>
    <property type="match status" value="1"/>
</dbReference>
<dbReference type="InterPro" id="IPR011705">
    <property type="entry name" value="BACK"/>
</dbReference>
<dbReference type="InterPro" id="IPR017096">
    <property type="entry name" value="BTB-kelch_protein"/>
</dbReference>
<dbReference type="InterPro" id="IPR000210">
    <property type="entry name" value="BTB/POZ_dom"/>
</dbReference>
<dbReference type="InterPro" id="IPR015915">
    <property type="entry name" value="Kelch-typ_b-propeller"/>
</dbReference>
<dbReference type="InterPro" id="IPR006652">
    <property type="entry name" value="Kelch_1"/>
</dbReference>
<dbReference type="InterPro" id="IPR030607">
    <property type="entry name" value="KLHL40_BTB/POZ_dom"/>
</dbReference>
<dbReference type="InterPro" id="IPR011333">
    <property type="entry name" value="SKP1/BTB/POZ_sf"/>
</dbReference>
<dbReference type="PANTHER" id="PTHR24412">
    <property type="entry name" value="KELCH PROTEIN"/>
    <property type="match status" value="1"/>
</dbReference>
<dbReference type="PANTHER" id="PTHR24412:SF22">
    <property type="entry name" value="KELCH-LIKE PROTEIN 40"/>
    <property type="match status" value="1"/>
</dbReference>
<dbReference type="Pfam" id="PF07707">
    <property type="entry name" value="BACK"/>
    <property type="match status" value="1"/>
</dbReference>
<dbReference type="Pfam" id="PF00651">
    <property type="entry name" value="BTB"/>
    <property type="match status" value="1"/>
</dbReference>
<dbReference type="Pfam" id="PF24681">
    <property type="entry name" value="Kelch_KLHDC2_KLHL20_DRC7"/>
    <property type="match status" value="1"/>
</dbReference>
<dbReference type="PIRSF" id="PIRSF037037">
    <property type="entry name" value="Kelch-like_protein_gigaxonin"/>
    <property type="match status" value="1"/>
</dbReference>
<dbReference type="SMART" id="SM00875">
    <property type="entry name" value="BACK"/>
    <property type="match status" value="1"/>
</dbReference>
<dbReference type="SMART" id="SM00225">
    <property type="entry name" value="BTB"/>
    <property type="match status" value="1"/>
</dbReference>
<dbReference type="SMART" id="SM00612">
    <property type="entry name" value="Kelch"/>
    <property type="match status" value="4"/>
</dbReference>
<dbReference type="SUPFAM" id="SSF117281">
    <property type="entry name" value="Kelch motif"/>
    <property type="match status" value="1"/>
</dbReference>
<dbReference type="SUPFAM" id="SSF54695">
    <property type="entry name" value="POZ domain"/>
    <property type="match status" value="1"/>
</dbReference>
<dbReference type="PROSITE" id="PS50097">
    <property type="entry name" value="BTB"/>
    <property type="match status" value="1"/>
</dbReference>
<evidence type="ECO:0000250" key="1">
    <source>
        <dbReference type="UniProtKB" id="Q9D783"/>
    </source>
</evidence>
<evidence type="ECO:0000255" key="2">
    <source>
        <dbReference type="PROSITE-ProRule" id="PRU00037"/>
    </source>
</evidence>
<evidence type="ECO:0000305" key="3"/>
<reference key="1">
    <citation type="submission" date="2004-10" db="EMBL/GenBank/DDBJ databases">
        <authorList>
            <consortium name="NIH - Xenopus Gene Collection (XGC) project"/>
        </authorList>
    </citation>
    <scope>NUCLEOTIDE SEQUENCE [LARGE SCALE MRNA]</scope>
    <source>
        <tissue>Brain</tissue>
    </source>
</reference>